<gene>
    <name evidence="1" type="primary">btuF</name>
    <name type="ordered locus">YPTS_0779</name>
</gene>
<name>BTUF_YERPB</name>
<evidence type="ECO:0000255" key="1">
    <source>
        <dbReference type="HAMAP-Rule" id="MF_01000"/>
    </source>
</evidence>
<protein>
    <recommendedName>
        <fullName evidence="1">Vitamin B12-binding protein</fullName>
    </recommendedName>
</protein>
<organism>
    <name type="scientific">Yersinia pseudotuberculosis serotype IB (strain PB1/+)</name>
    <dbReference type="NCBI Taxonomy" id="502801"/>
    <lineage>
        <taxon>Bacteria</taxon>
        <taxon>Pseudomonadati</taxon>
        <taxon>Pseudomonadota</taxon>
        <taxon>Gammaproteobacteria</taxon>
        <taxon>Enterobacterales</taxon>
        <taxon>Yersiniaceae</taxon>
        <taxon>Yersinia</taxon>
    </lineage>
</organism>
<proteinExistence type="inferred from homology"/>
<reference key="1">
    <citation type="submission" date="2008-04" db="EMBL/GenBank/DDBJ databases">
        <title>Complete sequence of Yersinia pseudotuberculosis PB1/+.</title>
        <authorList>
            <person name="Copeland A."/>
            <person name="Lucas S."/>
            <person name="Lapidus A."/>
            <person name="Glavina del Rio T."/>
            <person name="Dalin E."/>
            <person name="Tice H."/>
            <person name="Bruce D."/>
            <person name="Goodwin L."/>
            <person name="Pitluck S."/>
            <person name="Munk A.C."/>
            <person name="Brettin T."/>
            <person name="Detter J.C."/>
            <person name="Han C."/>
            <person name="Tapia R."/>
            <person name="Schmutz J."/>
            <person name="Larimer F."/>
            <person name="Land M."/>
            <person name="Hauser L."/>
            <person name="Challacombe J.F."/>
            <person name="Green L."/>
            <person name="Lindler L.E."/>
            <person name="Nikolich M.P."/>
            <person name="Richardson P."/>
        </authorList>
    </citation>
    <scope>NUCLEOTIDE SEQUENCE [LARGE SCALE GENOMIC DNA]</scope>
    <source>
        <strain>PB1/+</strain>
    </source>
</reference>
<keyword id="KW-1015">Disulfide bond</keyword>
<keyword id="KW-0574">Periplasm</keyword>
<keyword id="KW-0732">Signal</keyword>
<keyword id="KW-0813">Transport</keyword>
<feature type="signal peptide" evidence="1">
    <location>
        <begin position="1"/>
        <end position="27"/>
    </location>
</feature>
<feature type="chain" id="PRO_5000345663" description="Vitamin B12-binding protein">
    <location>
        <begin position="28"/>
        <end position="280"/>
    </location>
</feature>
<feature type="domain" description="Fe/B12 periplasmic-binding" evidence="1">
    <location>
        <begin position="30"/>
        <end position="277"/>
    </location>
</feature>
<feature type="binding site" evidence="1">
    <location>
        <position position="57"/>
    </location>
    <ligand>
        <name>cyanocob(III)alamin</name>
        <dbReference type="ChEBI" id="CHEBI:17439"/>
    </ligand>
</feature>
<feature type="site" description="Important for BtuC binding" evidence="1">
    <location>
        <position position="79"/>
    </location>
</feature>
<feature type="site" description="Important for BtuC binding" evidence="1">
    <location>
        <position position="209"/>
    </location>
</feature>
<feature type="disulfide bond" evidence="1">
    <location>
        <begin position="190"/>
        <end position="266"/>
    </location>
</feature>
<sequence>MMPLGLFPLPRAAVVLLISLLTLPAQAAERVISLSPSTTELAYAAGLGDKLVAVSAYSDYPESAKKLEHVASWQGINVERILALKPDLILAWRGGNPQRPLDQLAALGIPIFYSDPTHIDQIASDLDKLAQYSPHPEQAHQAAEQFRQHVNTLRDRYARSQPKRTFLQFGTQPLFTSSGHTLQSEVVSLCGGENIFADSRVPWPQVSREQVMTRKPQVIVVSGTQSQVDNVSAFWLPQLVVPVIALNEDWFNRASPRILLAAQQLCQQMASIPTPVAESH</sequence>
<dbReference type="EMBL" id="CP001048">
    <property type="protein sequence ID" value="ACC87763.1"/>
    <property type="molecule type" value="Genomic_DNA"/>
</dbReference>
<dbReference type="RefSeq" id="WP_011191763.1">
    <property type="nucleotide sequence ID" value="NZ_CP009780.1"/>
</dbReference>
<dbReference type="SMR" id="B2K552"/>
<dbReference type="GeneID" id="49787249"/>
<dbReference type="KEGG" id="ypb:YPTS_0779"/>
<dbReference type="GO" id="GO:0042597">
    <property type="term" value="C:periplasmic space"/>
    <property type="evidence" value="ECO:0007669"/>
    <property type="project" value="UniProtKB-SubCell"/>
</dbReference>
<dbReference type="GO" id="GO:0031419">
    <property type="term" value="F:cobalamin binding"/>
    <property type="evidence" value="ECO:0007669"/>
    <property type="project" value="InterPro"/>
</dbReference>
<dbReference type="GO" id="GO:0015889">
    <property type="term" value="P:cobalamin transport"/>
    <property type="evidence" value="ECO:0007669"/>
    <property type="project" value="UniProtKB-UniRule"/>
</dbReference>
<dbReference type="CDD" id="cd01144">
    <property type="entry name" value="BtuF"/>
    <property type="match status" value="1"/>
</dbReference>
<dbReference type="Gene3D" id="3.40.50.1980">
    <property type="entry name" value="Nitrogenase molybdenum iron protein domain"/>
    <property type="match status" value="2"/>
</dbReference>
<dbReference type="HAMAP" id="MF_01000">
    <property type="entry name" value="BtuF"/>
    <property type="match status" value="1"/>
</dbReference>
<dbReference type="InterPro" id="IPR002491">
    <property type="entry name" value="ABC_transptr_periplasmic_BD"/>
</dbReference>
<dbReference type="InterPro" id="IPR023544">
    <property type="entry name" value="ABC_transptr_vit_B12-bd"/>
</dbReference>
<dbReference type="InterPro" id="IPR054828">
    <property type="entry name" value="Vit_B12_bind_prot"/>
</dbReference>
<dbReference type="InterPro" id="IPR051030">
    <property type="entry name" value="Vitamin_B12-ABC_binding"/>
</dbReference>
<dbReference type="NCBIfam" id="NF002894">
    <property type="entry name" value="PRK03379.1"/>
    <property type="match status" value="1"/>
</dbReference>
<dbReference type="NCBIfam" id="NF038402">
    <property type="entry name" value="TroA_like"/>
    <property type="match status" value="1"/>
</dbReference>
<dbReference type="PANTHER" id="PTHR42860">
    <property type="entry name" value="VITAMIN B12-BINDING PROTEIN"/>
    <property type="match status" value="1"/>
</dbReference>
<dbReference type="PANTHER" id="PTHR42860:SF1">
    <property type="entry name" value="VITAMIN B12-BINDING PROTEIN"/>
    <property type="match status" value="1"/>
</dbReference>
<dbReference type="Pfam" id="PF01497">
    <property type="entry name" value="Peripla_BP_2"/>
    <property type="match status" value="1"/>
</dbReference>
<dbReference type="SUPFAM" id="SSF53807">
    <property type="entry name" value="Helical backbone' metal receptor"/>
    <property type="match status" value="1"/>
</dbReference>
<dbReference type="PROSITE" id="PS50983">
    <property type="entry name" value="FE_B12_PBP"/>
    <property type="match status" value="1"/>
</dbReference>
<comment type="function">
    <text evidence="1">Part of the ABC transporter complex BtuCDF involved in vitamin B12 import. Binds vitamin B12 and delivers it to the periplasmic surface of BtuC.</text>
</comment>
<comment type="subunit">
    <text evidence="1">The complex is composed of two ATP-binding proteins (BtuD), two transmembrane proteins (BtuC) and a solute-binding protein (BtuF).</text>
</comment>
<comment type="subcellular location">
    <subcellularLocation>
        <location evidence="1">Periplasm</location>
    </subcellularLocation>
</comment>
<comment type="similarity">
    <text evidence="1">Belongs to the BtuF family.</text>
</comment>
<accession>B2K552</accession>